<sequence length="186" mass="21002">MIGPPVNLPKWLEENSHLLKPPINNYCVYNGDFTVMIVGGPNARTDYHINTTPEWFYQHRGAMTLKIVDPTEGNNTFRDIVIREGDMFLLPANTPHNPVRFADTVGIVLEQKRPAGSLDRMRWYCQREGCGAVVKEAAFHCTDLGTQIKEAVEAFKADEEGRRCKQCGEVAEWCPKPGSIRDPNLE</sequence>
<dbReference type="EC" id="1.13.11.6" evidence="1"/>
<dbReference type="EMBL" id="CH408029">
    <property type="protein sequence ID" value="EAQ93606.1"/>
    <property type="molecule type" value="Genomic_DNA"/>
</dbReference>
<dbReference type="RefSeq" id="XP_001221062.1">
    <property type="nucleotide sequence ID" value="XM_001221061.1"/>
</dbReference>
<dbReference type="SMR" id="Q2HD63"/>
<dbReference type="FunCoup" id="Q2HD63">
    <property type="interactions" value="121"/>
</dbReference>
<dbReference type="STRING" id="306901.Q2HD63"/>
<dbReference type="GeneID" id="4386811"/>
<dbReference type="VEuPathDB" id="FungiDB:CHGG_01841"/>
<dbReference type="eggNOG" id="KOG3995">
    <property type="taxonomic scope" value="Eukaryota"/>
</dbReference>
<dbReference type="HOGENOM" id="CLU_095765_0_0_1"/>
<dbReference type="InParanoid" id="Q2HD63"/>
<dbReference type="OMA" id="KPPVGNQ"/>
<dbReference type="OrthoDB" id="204928at2759"/>
<dbReference type="UniPathway" id="UPA00253">
    <property type="reaction ID" value="UER00330"/>
</dbReference>
<dbReference type="Proteomes" id="UP000001056">
    <property type="component" value="Unassembled WGS sequence"/>
</dbReference>
<dbReference type="GO" id="GO:0005737">
    <property type="term" value="C:cytoplasm"/>
    <property type="evidence" value="ECO:0007669"/>
    <property type="project" value="UniProtKB-SubCell"/>
</dbReference>
<dbReference type="GO" id="GO:0000334">
    <property type="term" value="F:3-hydroxyanthranilate 3,4-dioxygenase activity"/>
    <property type="evidence" value="ECO:0007669"/>
    <property type="project" value="UniProtKB-UniRule"/>
</dbReference>
<dbReference type="GO" id="GO:0008198">
    <property type="term" value="F:ferrous iron binding"/>
    <property type="evidence" value="ECO:0007669"/>
    <property type="project" value="UniProtKB-UniRule"/>
</dbReference>
<dbReference type="GO" id="GO:0034354">
    <property type="term" value="P:'de novo' NAD biosynthetic process from L-tryptophan"/>
    <property type="evidence" value="ECO:0007669"/>
    <property type="project" value="UniProtKB-UniRule"/>
</dbReference>
<dbReference type="GO" id="GO:0043420">
    <property type="term" value="P:anthranilate metabolic process"/>
    <property type="evidence" value="ECO:0007669"/>
    <property type="project" value="UniProtKB-UniRule"/>
</dbReference>
<dbReference type="GO" id="GO:0006569">
    <property type="term" value="P:L-tryptophan catabolic process"/>
    <property type="evidence" value="ECO:0007669"/>
    <property type="project" value="UniProtKB-UniRule"/>
</dbReference>
<dbReference type="GO" id="GO:0019805">
    <property type="term" value="P:quinolinate biosynthetic process"/>
    <property type="evidence" value="ECO:0007669"/>
    <property type="project" value="UniProtKB-UniRule"/>
</dbReference>
<dbReference type="CDD" id="cd06123">
    <property type="entry name" value="cupin_HAO"/>
    <property type="match status" value="1"/>
</dbReference>
<dbReference type="FunFam" id="2.60.120.10:FF:000093">
    <property type="entry name" value="3-hydroxyanthranilate 3,4-dioxygenase"/>
    <property type="match status" value="1"/>
</dbReference>
<dbReference type="Gene3D" id="2.60.120.10">
    <property type="entry name" value="Jelly Rolls"/>
    <property type="match status" value="1"/>
</dbReference>
<dbReference type="HAMAP" id="MF_00825">
    <property type="entry name" value="3_HAO"/>
    <property type="match status" value="1"/>
</dbReference>
<dbReference type="InterPro" id="IPR010329">
    <property type="entry name" value="3hydroanth_dOase"/>
</dbReference>
<dbReference type="InterPro" id="IPR014710">
    <property type="entry name" value="RmlC-like_jellyroll"/>
</dbReference>
<dbReference type="InterPro" id="IPR011051">
    <property type="entry name" value="RmlC_Cupin_sf"/>
</dbReference>
<dbReference type="NCBIfam" id="TIGR03037">
    <property type="entry name" value="anthran_nbaC"/>
    <property type="match status" value="1"/>
</dbReference>
<dbReference type="PANTHER" id="PTHR15497">
    <property type="entry name" value="3-HYDROXYANTHRANILATE 3,4-DIOXYGENASE"/>
    <property type="match status" value="1"/>
</dbReference>
<dbReference type="PANTHER" id="PTHR15497:SF1">
    <property type="entry name" value="3-HYDROXYANTHRANILATE 3,4-DIOXYGENASE"/>
    <property type="match status" value="1"/>
</dbReference>
<dbReference type="Pfam" id="PF06052">
    <property type="entry name" value="3-HAO"/>
    <property type="match status" value="1"/>
</dbReference>
<dbReference type="SUPFAM" id="SSF51182">
    <property type="entry name" value="RmlC-like cupins"/>
    <property type="match status" value="1"/>
</dbReference>
<reference key="1">
    <citation type="journal article" date="2015" name="Genome Announc.">
        <title>Draft genome sequence of the cellulolytic fungus Chaetomium globosum.</title>
        <authorList>
            <person name="Cuomo C.A."/>
            <person name="Untereiner W.A."/>
            <person name="Ma L.-J."/>
            <person name="Grabherr M."/>
            <person name="Birren B.W."/>
        </authorList>
    </citation>
    <scope>NUCLEOTIDE SEQUENCE [LARGE SCALE GENOMIC DNA]</scope>
    <source>
        <strain>ATCC 6205 / CBS 148.51 / DSM 1962 / NBRC 6347 / NRRL 1970</strain>
    </source>
</reference>
<organism>
    <name type="scientific">Chaetomium globosum (strain ATCC 6205 / CBS 148.51 / DSM 1962 / NBRC 6347 / NRRL 1970)</name>
    <name type="common">Soil fungus</name>
    <dbReference type="NCBI Taxonomy" id="306901"/>
    <lineage>
        <taxon>Eukaryota</taxon>
        <taxon>Fungi</taxon>
        <taxon>Dikarya</taxon>
        <taxon>Ascomycota</taxon>
        <taxon>Pezizomycotina</taxon>
        <taxon>Sordariomycetes</taxon>
        <taxon>Sordariomycetidae</taxon>
        <taxon>Sordariales</taxon>
        <taxon>Chaetomiaceae</taxon>
        <taxon>Chaetomium</taxon>
    </lineage>
</organism>
<keyword id="KW-0963">Cytoplasm</keyword>
<keyword id="KW-0223">Dioxygenase</keyword>
<keyword id="KW-0408">Iron</keyword>
<keyword id="KW-0479">Metal-binding</keyword>
<keyword id="KW-0560">Oxidoreductase</keyword>
<keyword id="KW-0662">Pyridine nucleotide biosynthesis</keyword>
<keyword id="KW-1185">Reference proteome</keyword>
<evidence type="ECO:0000255" key="1">
    <source>
        <dbReference type="HAMAP-Rule" id="MF_03019"/>
    </source>
</evidence>
<proteinExistence type="inferred from homology"/>
<gene>
    <name evidence="1" type="primary">BNA1</name>
    <name type="ORF">CHGG_01841</name>
</gene>
<accession>Q2HD63</accession>
<name>3HAO_CHAGB</name>
<feature type="chain" id="PRO_0000361985" description="3-hydroxyanthranilate 3,4-dioxygenase">
    <location>
        <begin position="1"/>
        <end position="186"/>
    </location>
</feature>
<feature type="binding site" evidence="1">
    <location>
        <position position="44"/>
    </location>
    <ligand>
        <name>O2</name>
        <dbReference type="ChEBI" id="CHEBI:15379"/>
    </ligand>
</feature>
<feature type="binding site" evidence="1">
    <location>
        <position position="48"/>
    </location>
    <ligand>
        <name>Fe cation</name>
        <dbReference type="ChEBI" id="CHEBI:24875"/>
        <note>catalytic</note>
    </ligand>
</feature>
<feature type="binding site" evidence="1">
    <location>
        <position position="54"/>
    </location>
    <ligand>
        <name>Fe cation</name>
        <dbReference type="ChEBI" id="CHEBI:24875"/>
        <note>catalytic</note>
    </ligand>
</feature>
<feature type="binding site" evidence="1">
    <location>
        <position position="54"/>
    </location>
    <ligand>
        <name>substrate</name>
    </ligand>
</feature>
<feature type="binding site" evidence="1">
    <location>
        <position position="96"/>
    </location>
    <ligand>
        <name>Fe cation</name>
        <dbReference type="ChEBI" id="CHEBI:24875"/>
        <note>catalytic</note>
    </ligand>
</feature>
<feature type="binding site" evidence="1">
    <location>
        <position position="100"/>
    </location>
    <ligand>
        <name>substrate</name>
    </ligand>
</feature>
<feature type="binding site" evidence="1">
    <location>
        <position position="110"/>
    </location>
    <ligand>
        <name>substrate</name>
    </ligand>
</feature>
<feature type="binding site" evidence="1">
    <location>
        <position position="125"/>
    </location>
    <ligand>
        <name>a divalent metal cation</name>
        <dbReference type="ChEBI" id="CHEBI:60240"/>
    </ligand>
</feature>
<feature type="binding site" evidence="1">
    <location>
        <position position="130"/>
    </location>
    <ligand>
        <name>a divalent metal cation</name>
        <dbReference type="ChEBI" id="CHEBI:60240"/>
    </ligand>
</feature>
<feature type="binding site" evidence="1">
    <location>
        <position position="164"/>
    </location>
    <ligand>
        <name>a divalent metal cation</name>
        <dbReference type="ChEBI" id="CHEBI:60240"/>
    </ligand>
</feature>
<feature type="binding site" evidence="1">
    <location>
        <position position="167"/>
    </location>
    <ligand>
        <name>a divalent metal cation</name>
        <dbReference type="ChEBI" id="CHEBI:60240"/>
    </ligand>
</feature>
<protein>
    <recommendedName>
        <fullName evidence="1">3-hydroxyanthranilate 3,4-dioxygenase</fullName>
        <ecNumber evidence="1">1.13.11.6</ecNumber>
    </recommendedName>
    <alternativeName>
        <fullName evidence="1">3-hydroxyanthranilate oxygenase</fullName>
        <shortName evidence="1">3-HAO</shortName>
    </alternativeName>
    <alternativeName>
        <fullName evidence="1">3-hydroxyanthranilic acid dioxygenase</fullName>
        <shortName evidence="1">HAD</shortName>
    </alternativeName>
    <alternativeName>
        <fullName evidence="1">Biosynthesis of nicotinic acid protein 1</fullName>
    </alternativeName>
</protein>
<comment type="function">
    <text evidence="1">Catalyzes the oxidative ring opening of 3-hydroxyanthranilate to 2-amino-3-carboxymuconate semialdehyde, which spontaneously cyclizes to quinolinate.</text>
</comment>
<comment type="catalytic activity">
    <reaction evidence="1">
        <text>3-hydroxyanthranilate + O2 = (2Z,4Z)-2-amino-3-carboxymuconate 6-semialdehyde</text>
        <dbReference type="Rhea" id="RHEA:17953"/>
        <dbReference type="ChEBI" id="CHEBI:15379"/>
        <dbReference type="ChEBI" id="CHEBI:36559"/>
        <dbReference type="ChEBI" id="CHEBI:77612"/>
        <dbReference type="EC" id="1.13.11.6"/>
    </reaction>
</comment>
<comment type="cofactor">
    <cofactor evidence="1">
        <name>Fe(2+)</name>
        <dbReference type="ChEBI" id="CHEBI:29033"/>
    </cofactor>
</comment>
<comment type="pathway">
    <text evidence="1">Cofactor biosynthesis; NAD(+) biosynthesis; quinolinate from L-kynurenine: step 3/3.</text>
</comment>
<comment type="subcellular location">
    <subcellularLocation>
        <location evidence="1">Cytoplasm</location>
    </subcellularLocation>
</comment>
<comment type="similarity">
    <text evidence="1">Belongs to the 3-HAO family.</text>
</comment>